<organism>
    <name type="scientific">Bacillus cereus (strain B4264)</name>
    <dbReference type="NCBI Taxonomy" id="405532"/>
    <lineage>
        <taxon>Bacteria</taxon>
        <taxon>Bacillati</taxon>
        <taxon>Bacillota</taxon>
        <taxon>Bacilli</taxon>
        <taxon>Bacillales</taxon>
        <taxon>Bacillaceae</taxon>
        <taxon>Bacillus</taxon>
        <taxon>Bacillus cereus group</taxon>
    </lineage>
</organism>
<proteinExistence type="inferred from homology"/>
<protein>
    <recommendedName>
        <fullName evidence="1">Orotate phosphoribosyltransferase</fullName>
        <shortName evidence="1">OPRT</shortName>
        <shortName evidence="1">OPRTase</shortName>
        <ecNumber evidence="1">2.4.2.10</ecNumber>
    </recommendedName>
</protein>
<gene>
    <name evidence="1" type="primary">pyrE</name>
    <name type="ordered locus">BCB4264_A3980</name>
</gene>
<evidence type="ECO:0000255" key="1">
    <source>
        <dbReference type="HAMAP-Rule" id="MF_01208"/>
    </source>
</evidence>
<sequence>MKKEIASHLLEIGAVFLQPNDPFTWSSGMKSPIYCDNRLTLSYPKVRQAIAAGLEELIKEHFPTVEVIAGTATAGIAHAAWVSDRMDLPMCYVRSKAKGHGKGNQIEGKAEKGQKVVVVEDLISTGGSAITCVEALREAGCEVLGIVSIFTYELEAGKEKLEAANVVSYSLSDYSALTEVAAEKGMIGQAEMKKLQEWRKNPANEAWITA</sequence>
<keyword id="KW-0328">Glycosyltransferase</keyword>
<keyword id="KW-0460">Magnesium</keyword>
<keyword id="KW-0665">Pyrimidine biosynthesis</keyword>
<keyword id="KW-0808">Transferase</keyword>
<feature type="chain" id="PRO_1000138762" description="Orotate phosphoribosyltransferase">
    <location>
        <begin position="1"/>
        <end position="210"/>
    </location>
</feature>
<feature type="binding site" evidence="1">
    <location>
        <position position="94"/>
    </location>
    <ligand>
        <name>5-phospho-alpha-D-ribose 1-diphosphate</name>
        <dbReference type="ChEBI" id="CHEBI:58017"/>
        <note>ligand shared between dimeric partners</note>
    </ligand>
</feature>
<feature type="binding site" evidence="1">
    <location>
        <position position="98"/>
    </location>
    <ligand>
        <name>5-phospho-alpha-D-ribose 1-diphosphate</name>
        <dbReference type="ChEBI" id="CHEBI:58017"/>
        <note>ligand shared between dimeric partners</note>
    </ligand>
</feature>
<feature type="binding site" evidence="1">
    <location>
        <position position="100"/>
    </location>
    <ligand>
        <name>5-phospho-alpha-D-ribose 1-diphosphate</name>
        <dbReference type="ChEBI" id="CHEBI:58017"/>
        <note>ligand shared between dimeric partners</note>
    </ligand>
</feature>
<feature type="binding site" description="in other chain" evidence="1">
    <location>
        <begin position="120"/>
        <end position="128"/>
    </location>
    <ligand>
        <name>5-phospho-alpha-D-ribose 1-diphosphate</name>
        <dbReference type="ChEBI" id="CHEBI:58017"/>
        <note>ligand shared between dimeric partners</note>
    </ligand>
</feature>
<feature type="binding site" evidence="1">
    <location>
        <position position="124"/>
    </location>
    <ligand>
        <name>orotate</name>
        <dbReference type="ChEBI" id="CHEBI:30839"/>
    </ligand>
</feature>
<dbReference type="EC" id="2.4.2.10" evidence="1"/>
<dbReference type="EMBL" id="CP001176">
    <property type="protein sequence ID" value="ACK62519.1"/>
    <property type="molecule type" value="Genomic_DNA"/>
</dbReference>
<dbReference type="RefSeq" id="WP_000711451.1">
    <property type="nucleotide sequence ID" value="NC_011725.1"/>
</dbReference>
<dbReference type="SMR" id="B7H6L8"/>
<dbReference type="KEGG" id="bcb:BCB4264_A3980"/>
<dbReference type="HOGENOM" id="CLU_074878_1_1_9"/>
<dbReference type="UniPathway" id="UPA00070">
    <property type="reaction ID" value="UER00119"/>
</dbReference>
<dbReference type="Proteomes" id="UP000007096">
    <property type="component" value="Chromosome"/>
</dbReference>
<dbReference type="GO" id="GO:0000287">
    <property type="term" value="F:magnesium ion binding"/>
    <property type="evidence" value="ECO:0007669"/>
    <property type="project" value="UniProtKB-UniRule"/>
</dbReference>
<dbReference type="GO" id="GO:0004588">
    <property type="term" value="F:orotate phosphoribosyltransferase activity"/>
    <property type="evidence" value="ECO:0007669"/>
    <property type="project" value="UniProtKB-UniRule"/>
</dbReference>
<dbReference type="GO" id="GO:0044205">
    <property type="term" value="P:'de novo' UMP biosynthetic process"/>
    <property type="evidence" value="ECO:0007669"/>
    <property type="project" value="UniProtKB-UniRule"/>
</dbReference>
<dbReference type="GO" id="GO:0019856">
    <property type="term" value="P:pyrimidine nucleobase biosynthetic process"/>
    <property type="evidence" value="ECO:0007669"/>
    <property type="project" value="TreeGrafter"/>
</dbReference>
<dbReference type="CDD" id="cd06223">
    <property type="entry name" value="PRTases_typeI"/>
    <property type="match status" value="1"/>
</dbReference>
<dbReference type="Gene3D" id="3.40.50.2020">
    <property type="match status" value="1"/>
</dbReference>
<dbReference type="HAMAP" id="MF_01208">
    <property type="entry name" value="PyrE"/>
    <property type="match status" value="1"/>
</dbReference>
<dbReference type="InterPro" id="IPR023031">
    <property type="entry name" value="OPRT"/>
</dbReference>
<dbReference type="InterPro" id="IPR004467">
    <property type="entry name" value="Or_phspho_trans_dom"/>
</dbReference>
<dbReference type="InterPro" id="IPR000836">
    <property type="entry name" value="PRibTrfase_dom"/>
</dbReference>
<dbReference type="InterPro" id="IPR029057">
    <property type="entry name" value="PRTase-like"/>
</dbReference>
<dbReference type="NCBIfam" id="TIGR00336">
    <property type="entry name" value="pyrE"/>
    <property type="match status" value="1"/>
</dbReference>
<dbReference type="PANTHER" id="PTHR19278">
    <property type="entry name" value="OROTATE PHOSPHORIBOSYLTRANSFERASE"/>
    <property type="match status" value="1"/>
</dbReference>
<dbReference type="PANTHER" id="PTHR19278:SF9">
    <property type="entry name" value="URIDINE 5'-MONOPHOSPHATE SYNTHASE"/>
    <property type="match status" value="1"/>
</dbReference>
<dbReference type="Pfam" id="PF00156">
    <property type="entry name" value="Pribosyltran"/>
    <property type="match status" value="1"/>
</dbReference>
<dbReference type="SUPFAM" id="SSF53271">
    <property type="entry name" value="PRTase-like"/>
    <property type="match status" value="1"/>
</dbReference>
<dbReference type="PROSITE" id="PS00103">
    <property type="entry name" value="PUR_PYR_PR_TRANSFER"/>
    <property type="match status" value="1"/>
</dbReference>
<comment type="function">
    <text evidence="1">Catalyzes the transfer of a ribosyl phosphate group from 5-phosphoribose 1-diphosphate to orotate, leading to the formation of orotidine monophosphate (OMP).</text>
</comment>
<comment type="catalytic activity">
    <reaction evidence="1">
        <text>orotidine 5'-phosphate + diphosphate = orotate + 5-phospho-alpha-D-ribose 1-diphosphate</text>
        <dbReference type="Rhea" id="RHEA:10380"/>
        <dbReference type="ChEBI" id="CHEBI:30839"/>
        <dbReference type="ChEBI" id="CHEBI:33019"/>
        <dbReference type="ChEBI" id="CHEBI:57538"/>
        <dbReference type="ChEBI" id="CHEBI:58017"/>
        <dbReference type="EC" id="2.4.2.10"/>
    </reaction>
</comment>
<comment type="cofactor">
    <cofactor evidence="1">
        <name>Mg(2+)</name>
        <dbReference type="ChEBI" id="CHEBI:18420"/>
    </cofactor>
</comment>
<comment type="pathway">
    <text evidence="1">Pyrimidine metabolism; UMP biosynthesis via de novo pathway; UMP from orotate: step 1/2.</text>
</comment>
<comment type="subunit">
    <text evidence="1">Homodimer.</text>
</comment>
<comment type="similarity">
    <text evidence="1">Belongs to the purine/pyrimidine phosphoribosyltransferase family. PyrE subfamily.</text>
</comment>
<reference key="1">
    <citation type="submission" date="2008-10" db="EMBL/GenBank/DDBJ databases">
        <title>Genome sequence of Bacillus cereus B4264.</title>
        <authorList>
            <person name="Dodson R.J."/>
            <person name="Durkin A.S."/>
            <person name="Rosovitz M.J."/>
            <person name="Rasko D.A."/>
            <person name="Hoffmaster A."/>
            <person name="Ravel J."/>
            <person name="Sutton G."/>
        </authorList>
    </citation>
    <scope>NUCLEOTIDE SEQUENCE [LARGE SCALE GENOMIC DNA]</scope>
    <source>
        <strain>B4264</strain>
    </source>
</reference>
<accession>B7H6L8</accession>
<name>PYRE_BACC4</name>